<evidence type="ECO:0000255" key="1">
    <source>
        <dbReference type="HAMAP-Rule" id="MF_00159"/>
    </source>
</evidence>
<comment type="function">
    <text evidence="1">Converts 2C-methyl-D-erythritol 2,4-cyclodiphosphate (ME-2,4cPP) into 1-hydroxy-2-methyl-2-(E)-butenyl 4-diphosphate.</text>
</comment>
<comment type="catalytic activity">
    <reaction evidence="1">
        <text>(2E)-4-hydroxy-3-methylbut-2-enyl diphosphate + oxidized [flavodoxin] + H2O + 2 H(+) = 2-C-methyl-D-erythritol 2,4-cyclic diphosphate + reduced [flavodoxin]</text>
        <dbReference type="Rhea" id="RHEA:43604"/>
        <dbReference type="Rhea" id="RHEA-COMP:10622"/>
        <dbReference type="Rhea" id="RHEA-COMP:10623"/>
        <dbReference type="ChEBI" id="CHEBI:15377"/>
        <dbReference type="ChEBI" id="CHEBI:15378"/>
        <dbReference type="ChEBI" id="CHEBI:57618"/>
        <dbReference type="ChEBI" id="CHEBI:58210"/>
        <dbReference type="ChEBI" id="CHEBI:58483"/>
        <dbReference type="ChEBI" id="CHEBI:128753"/>
        <dbReference type="EC" id="1.17.7.3"/>
    </reaction>
</comment>
<comment type="cofactor">
    <cofactor evidence="1">
        <name>[4Fe-4S] cluster</name>
        <dbReference type="ChEBI" id="CHEBI:49883"/>
    </cofactor>
    <text evidence="1">Binds 1 [4Fe-4S] cluster.</text>
</comment>
<comment type="pathway">
    <text evidence="1">Isoprenoid biosynthesis; isopentenyl diphosphate biosynthesis via DXP pathway; isopentenyl diphosphate from 1-deoxy-D-xylulose 5-phosphate: step 5/6.</text>
</comment>
<comment type="similarity">
    <text evidence="1">Belongs to the IspG family.</text>
</comment>
<keyword id="KW-0004">4Fe-4S</keyword>
<keyword id="KW-0408">Iron</keyword>
<keyword id="KW-0411">Iron-sulfur</keyword>
<keyword id="KW-0414">Isoprene biosynthesis</keyword>
<keyword id="KW-0479">Metal-binding</keyword>
<keyword id="KW-0560">Oxidoreductase</keyword>
<gene>
    <name evidence="1" type="primary">ispG</name>
    <name type="ordered locus">YE1073</name>
</gene>
<reference key="1">
    <citation type="journal article" date="2006" name="PLoS Genet.">
        <title>The complete genome sequence and comparative genome analysis of the high pathogenicity Yersinia enterocolitica strain 8081.</title>
        <authorList>
            <person name="Thomson N.R."/>
            <person name="Howard S."/>
            <person name="Wren B.W."/>
            <person name="Holden M.T.G."/>
            <person name="Crossman L."/>
            <person name="Challis G.L."/>
            <person name="Churcher C."/>
            <person name="Mungall K."/>
            <person name="Brooks K."/>
            <person name="Chillingworth T."/>
            <person name="Feltwell T."/>
            <person name="Abdellah Z."/>
            <person name="Hauser H."/>
            <person name="Jagels K."/>
            <person name="Maddison M."/>
            <person name="Moule S."/>
            <person name="Sanders M."/>
            <person name="Whitehead S."/>
            <person name="Quail M.A."/>
            <person name="Dougan G."/>
            <person name="Parkhill J."/>
            <person name="Prentice M.B."/>
        </authorList>
    </citation>
    <scope>NUCLEOTIDE SEQUENCE [LARGE SCALE GENOMIC DNA]</scope>
    <source>
        <strain>NCTC 13174 / 8081</strain>
    </source>
</reference>
<dbReference type="EC" id="1.17.7.3" evidence="1"/>
<dbReference type="EMBL" id="AM286415">
    <property type="protein sequence ID" value="CAL11170.1"/>
    <property type="molecule type" value="Genomic_DNA"/>
</dbReference>
<dbReference type="RefSeq" id="WP_005172591.1">
    <property type="nucleotide sequence ID" value="NC_008800.1"/>
</dbReference>
<dbReference type="RefSeq" id="YP_001005405.1">
    <property type="nucleotide sequence ID" value="NC_008800.1"/>
</dbReference>
<dbReference type="SMR" id="A1JKS2"/>
<dbReference type="KEGG" id="yen:YE1073"/>
<dbReference type="PATRIC" id="fig|393305.7.peg.1170"/>
<dbReference type="eggNOG" id="COG0821">
    <property type="taxonomic scope" value="Bacteria"/>
</dbReference>
<dbReference type="HOGENOM" id="CLU_042258_0_0_6"/>
<dbReference type="OrthoDB" id="9803214at2"/>
<dbReference type="UniPathway" id="UPA00056">
    <property type="reaction ID" value="UER00096"/>
</dbReference>
<dbReference type="Proteomes" id="UP000000642">
    <property type="component" value="Chromosome"/>
</dbReference>
<dbReference type="GO" id="GO:0051539">
    <property type="term" value="F:4 iron, 4 sulfur cluster binding"/>
    <property type="evidence" value="ECO:0007669"/>
    <property type="project" value="UniProtKB-UniRule"/>
</dbReference>
<dbReference type="GO" id="GO:0046429">
    <property type="term" value="F:4-hydroxy-3-methylbut-2-en-1-yl diphosphate synthase activity (ferredoxin)"/>
    <property type="evidence" value="ECO:0007669"/>
    <property type="project" value="UniProtKB-UniRule"/>
</dbReference>
<dbReference type="GO" id="GO:0141197">
    <property type="term" value="F:4-hydroxy-3-methylbut-2-enyl-diphosphate synthase activity (flavodoxin)"/>
    <property type="evidence" value="ECO:0007669"/>
    <property type="project" value="UniProtKB-EC"/>
</dbReference>
<dbReference type="GO" id="GO:0005506">
    <property type="term" value="F:iron ion binding"/>
    <property type="evidence" value="ECO:0007669"/>
    <property type="project" value="InterPro"/>
</dbReference>
<dbReference type="GO" id="GO:0019288">
    <property type="term" value="P:isopentenyl diphosphate biosynthetic process, methylerythritol 4-phosphate pathway"/>
    <property type="evidence" value="ECO:0007669"/>
    <property type="project" value="UniProtKB-UniRule"/>
</dbReference>
<dbReference type="GO" id="GO:0016114">
    <property type="term" value="P:terpenoid biosynthetic process"/>
    <property type="evidence" value="ECO:0007669"/>
    <property type="project" value="InterPro"/>
</dbReference>
<dbReference type="FunFam" id="3.20.20.20:FF:000001">
    <property type="entry name" value="4-hydroxy-3-methylbut-2-en-1-yl diphosphate synthase (flavodoxin)"/>
    <property type="match status" value="1"/>
</dbReference>
<dbReference type="FunFam" id="3.30.413.10:FF:000002">
    <property type="entry name" value="4-hydroxy-3-methylbut-2-en-1-yl diphosphate synthase (flavodoxin)"/>
    <property type="match status" value="1"/>
</dbReference>
<dbReference type="Gene3D" id="3.20.20.20">
    <property type="entry name" value="Dihydropteroate synthase-like"/>
    <property type="match status" value="1"/>
</dbReference>
<dbReference type="Gene3D" id="3.30.413.10">
    <property type="entry name" value="Sulfite Reductase Hemoprotein, domain 1"/>
    <property type="match status" value="1"/>
</dbReference>
<dbReference type="HAMAP" id="MF_00159">
    <property type="entry name" value="IspG"/>
    <property type="match status" value="1"/>
</dbReference>
<dbReference type="InterPro" id="IPR011005">
    <property type="entry name" value="Dihydropteroate_synth-like_sf"/>
</dbReference>
<dbReference type="InterPro" id="IPR016425">
    <property type="entry name" value="IspG_bac"/>
</dbReference>
<dbReference type="InterPro" id="IPR004588">
    <property type="entry name" value="IspG_bac-typ"/>
</dbReference>
<dbReference type="InterPro" id="IPR045854">
    <property type="entry name" value="NO2/SO3_Rdtase_4Fe4S_sf"/>
</dbReference>
<dbReference type="NCBIfam" id="TIGR00612">
    <property type="entry name" value="ispG_gcpE"/>
    <property type="match status" value="1"/>
</dbReference>
<dbReference type="NCBIfam" id="NF001540">
    <property type="entry name" value="PRK00366.1"/>
    <property type="match status" value="1"/>
</dbReference>
<dbReference type="PANTHER" id="PTHR30454">
    <property type="entry name" value="4-HYDROXY-3-METHYLBUT-2-EN-1-YL DIPHOSPHATE SYNTHASE"/>
    <property type="match status" value="1"/>
</dbReference>
<dbReference type="PANTHER" id="PTHR30454:SF0">
    <property type="entry name" value="4-HYDROXY-3-METHYLBUT-2-EN-1-YL DIPHOSPHATE SYNTHASE (FERREDOXIN), CHLOROPLASTIC"/>
    <property type="match status" value="1"/>
</dbReference>
<dbReference type="Pfam" id="PF04551">
    <property type="entry name" value="GcpE"/>
    <property type="match status" value="1"/>
</dbReference>
<dbReference type="PIRSF" id="PIRSF004640">
    <property type="entry name" value="IspG"/>
    <property type="match status" value="1"/>
</dbReference>
<dbReference type="SUPFAM" id="SSF51717">
    <property type="entry name" value="Dihydropteroate synthetase-like"/>
    <property type="match status" value="1"/>
</dbReference>
<dbReference type="SUPFAM" id="SSF56014">
    <property type="entry name" value="Nitrite and sulphite reductase 4Fe-4S domain-like"/>
    <property type="match status" value="1"/>
</dbReference>
<name>ISPG_YERE8</name>
<sequence length="374" mass="40921">MHNESPIIRRKSTRIYVGKVPIGDGAPITVQSMTNTKTTDVAATVAQIKALERVGVDIVRVSVPTMDAAEAFKLIKQQSNVPLVADIHFDYRIALKVAEYGVDCLRINPGNIGSEERIRSVVDCARHHNIPIRIGINGGSLEKDIQEKYGEPTPEALLESAMRHVDILDRLNFDQFKVSVKASDVYLAVNSYRLLAKQINNPLHLGITEAGGARSGSVKSAIGLGLLLSEGIGDTLRISLAADPVEEVKVGFDILKSLRIRSRGINFIACPTCSRQEFDVIGTVNALEQRLEDLITPMDVSIIGCVVNGPGEALVSTIGVTGARNHSGFYEDGVRQRERFDNEKMIDQLEAKIRAKASMLDANNRIVINMLEEK</sequence>
<proteinExistence type="inferred from homology"/>
<organism>
    <name type="scientific">Yersinia enterocolitica serotype O:8 / biotype 1B (strain NCTC 13174 / 8081)</name>
    <dbReference type="NCBI Taxonomy" id="393305"/>
    <lineage>
        <taxon>Bacteria</taxon>
        <taxon>Pseudomonadati</taxon>
        <taxon>Pseudomonadota</taxon>
        <taxon>Gammaproteobacteria</taxon>
        <taxon>Enterobacterales</taxon>
        <taxon>Yersiniaceae</taxon>
        <taxon>Yersinia</taxon>
    </lineage>
</organism>
<protein>
    <recommendedName>
        <fullName evidence="1">4-hydroxy-3-methylbut-2-en-1-yl diphosphate synthase (flavodoxin)</fullName>
        <ecNumber evidence="1">1.17.7.3</ecNumber>
    </recommendedName>
    <alternativeName>
        <fullName evidence="1">1-hydroxy-2-methyl-2-(E)-butenyl 4-diphosphate synthase</fullName>
    </alternativeName>
</protein>
<accession>A1JKS2</accession>
<feature type="chain" id="PRO_1000011545" description="4-hydroxy-3-methylbut-2-en-1-yl diphosphate synthase (flavodoxin)">
    <location>
        <begin position="1"/>
        <end position="374"/>
    </location>
</feature>
<feature type="binding site" evidence="1">
    <location>
        <position position="270"/>
    </location>
    <ligand>
        <name>[4Fe-4S] cluster</name>
        <dbReference type="ChEBI" id="CHEBI:49883"/>
    </ligand>
</feature>
<feature type="binding site" evidence="1">
    <location>
        <position position="273"/>
    </location>
    <ligand>
        <name>[4Fe-4S] cluster</name>
        <dbReference type="ChEBI" id="CHEBI:49883"/>
    </ligand>
</feature>
<feature type="binding site" evidence="1">
    <location>
        <position position="305"/>
    </location>
    <ligand>
        <name>[4Fe-4S] cluster</name>
        <dbReference type="ChEBI" id="CHEBI:49883"/>
    </ligand>
</feature>
<feature type="binding site" evidence="1">
    <location>
        <position position="312"/>
    </location>
    <ligand>
        <name>[4Fe-4S] cluster</name>
        <dbReference type="ChEBI" id="CHEBI:49883"/>
    </ligand>
</feature>